<reference key="1">
    <citation type="journal article" date="1993" name="J. Bacteriol.">
        <title>The Salmonella typhimurium uracil-sensitive mutation use is in argU and encodes a minor arginine tRNA.</title>
        <authorList>
            <person name="Lu C.D."/>
            <person name="Abdelal A.T."/>
        </authorList>
    </citation>
    <scope>NUCLEOTIDE SEQUENCE [GENOMIC DNA]</scope>
</reference>
<reference key="2">
    <citation type="journal article" date="2001" name="Nature">
        <title>Complete genome sequence of Salmonella enterica serovar Typhimurium LT2.</title>
        <authorList>
            <person name="McClelland M."/>
            <person name="Sanderson K.E."/>
            <person name="Spieth J."/>
            <person name="Clifton S.W."/>
            <person name="Latreille P."/>
            <person name="Courtney L."/>
            <person name="Porwollik S."/>
            <person name="Ali J."/>
            <person name="Dante M."/>
            <person name="Du F."/>
            <person name="Hou S."/>
            <person name="Layman D."/>
            <person name="Leonard S."/>
            <person name="Nguyen C."/>
            <person name="Scott K."/>
            <person name="Holmes A."/>
            <person name="Grewal N."/>
            <person name="Mulvaney E."/>
            <person name="Ryan E."/>
            <person name="Sun H."/>
            <person name="Florea L."/>
            <person name="Miller W."/>
            <person name="Stoneking T."/>
            <person name="Nhan M."/>
            <person name="Waterston R."/>
            <person name="Wilson R.K."/>
        </authorList>
    </citation>
    <scope>NUCLEOTIDE SEQUENCE [LARGE SCALE GENOMIC DNA]</scope>
    <source>
        <strain>LT2 / SGSC1412 / ATCC 700720</strain>
    </source>
</reference>
<organism>
    <name type="scientific">Salmonella typhimurium (strain LT2 / SGSC1412 / ATCC 700720)</name>
    <dbReference type="NCBI Taxonomy" id="99287"/>
    <lineage>
        <taxon>Bacteria</taxon>
        <taxon>Pseudomonadati</taxon>
        <taxon>Pseudomonadota</taxon>
        <taxon>Gammaproteobacteria</taxon>
        <taxon>Enterobacterales</taxon>
        <taxon>Enterobacteriaceae</taxon>
        <taxon>Salmonella</taxon>
    </lineage>
</organism>
<protein>
    <recommendedName>
        <fullName evidence="1">UDP-N-acetyl-D-mannosaminuronic acid transferase</fullName>
        <shortName evidence="1">UDP-ManNAcA transferase</shortName>
        <ecNumber evidence="1">2.4.1.180</ecNumber>
    </recommendedName>
</protein>
<name>WECG_SALTY</name>
<accession>P37457</accession>
<dbReference type="EC" id="2.4.1.180" evidence="1"/>
<dbReference type="EMBL" id="M95047">
    <property type="protein sequence ID" value="AAA92025.1"/>
    <property type="molecule type" value="Genomic_DNA"/>
</dbReference>
<dbReference type="EMBL" id="AF233324">
    <property type="protein sequence ID" value="AAF33458.1"/>
    <property type="molecule type" value="Genomic_DNA"/>
</dbReference>
<dbReference type="EMBL" id="AE006468">
    <property type="protein sequence ID" value="AAL22778.1"/>
    <property type="molecule type" value="Genomic_DNA"/>
</dbReference>
<dbReference type="PIR" id="S27727">
    <property type="entry name" value="S27727"/>
</dbReference>
<dbReference type="RefSeq" id="NP_462819.1">
    <property type="nucleotide sequence ID" value="NC_003197.2"/>
</dbReference>
<dbReference type="RefSeq" id="WP_000183621.1">
    <property type="nucleotide sequence ID" value="NC_003197.2"/>
</dbReference>
<dbReference type="SMR" id="P37457"/>
<dbReference type="STRING" id="99287.STM3929"/>
<dbReference type="CAZy" id="GT26">
    <property type="family name" value="Glycosyltransferase Family 26"/>
</dbReference>
<dbReference type="PaxDb" id="99287-STM3929"/>
<dbReference type="DNASU" id="1255455"/>
<dbReference type="GeneID" id="1255455"/>
<dbReference type="KEGG" id="stm:STM3929"/>
<dbReference type="PATRIC" id="fig|99287.12.peg.4150"/>
<dbReference type="HOGENOM" id="CLU_063203_3_2_6"/>
<dbReference type="OMA" id="NAHAMNL"/>
<dbReference type="PhylomeDB" id="P37457"/>
<dbReference type="BioCyc" id="SENT99287:STM3929-MONOMER"/>
<dbReference type="UniPathway" id="UPA00566"/>
<dbReference type="Proteomes" id="UP000001014">
    <property type="component" value="Chromosome"/>
</dbReference>
<dbReference type="GO" id="GO:0016758">
    <property type="term" value="F:hexosyltransferase activity"/>
    <property type="evidence" value="ECO:0000318"/>
    <property type="project" value="GO_Central"/>
</dbReference>
<dbReference type="GO" id="GO:0047241">
    <property type="term" value="F:lipopolysaccharide N-acetylmannosaminouronosyltransferase activity"/>
    <property type="evidence" value="ECO:0007669"/>
    <property type="project" value="UniProtKB-UniRule"/>
</dbReference>
<dbReference type="GO" id="GO:0009246">
    <property type="term" value="P:enterobacterial common antigen biosynthetic process"/>
    <property type="evidence" value="ECO:0007669"/>
    <property type="project" value="UniProtKB-UniRule"/>
</dbReference>
<dbReference type="CDD" id="cd06533">
    <property type="entry name" value="Glyco_transf_WecG_TagA"/>
    <property type="match status" value="1"/>
</dbReference>
<dbReference type="HAMAP" id="MF_01001">
    <property type="entry name" value="WecG_RffM"/>
    <property type="match status" value="1"/>
</dbReference>
<dbReference type="InterPro" id="IPR023085">
    <property type="entry name" value="UDP-ManNAcA_Trfase_WecG"/>
</dbReference>
<dbReference type="InterPro" id="IPR004629">
    <property type="entry name" value="WecG_TagA_CpsF"/>
</dbReference>
<dbReference type="NCBIfam" id="NF002980">
    <property type="entry name" value="PRK03692.1"/>
    <property type="match status" value="1"/>
</dbReference>
<dbReference type="NCBIfam" id="TIGR00696">
    <property type="entry name" value="wecG_tagA_cpsF"/>
    <property type="match status" value="1"/>
</dbReference>
<dbReference type="PANTHER" id="PTHR34136">
    <property type="match status" value="1"/>
</dbReference>
<dbReference type="PANTHER" id="PTHR34136:SF1">
    <property type="entry name" value="UDP-N-ACETYL-D-MANNOSAMINURONIC ACID TRANSFERASE"/>
    <property type="match status" value="1"/>
</dbReference>
<dbReference type="Pfam" id="PF03808">
    <property type="entry name" value="Glyco_tran_WecG"/>
    <property type="match status" value="1"/>
</dbReference>
<keyword id="KW-0328">Glycosyltransferase</keyword>
<keyword id="KW-1185">Reference proteome</keyword>
<keyword id="KW-0808">Transferase</keyword>
<sequence>MTNNAAAPLYSLRGLPLIGWRDMSHALNYLFADGQLKQGTLVAINAEKLLTAEDNPEVRALIAAAEFKYADGISVVRSIRKKFPQAQVSRVAGADLWEALMARAGKEGTPVFLVGGKPEVLAQTEAKLRTQWNVNIVGSQDGYFTPEQRQALFARIHASGAKIVTVAMGSPKQELLMRDCREVHPHALYMGVGGTYDVFTGHVKRAPKIWQNLGLEWLYRLLSQPRRITRQMRLLRYLRWHYTGDL</sequence>
<comment type="function">
    <text evidence="1">Catalyzes the synthesis of Und-PP-GlcNAc-ManNAcA (Lipid II), the second lipid-linked intermediate involved in enterobacterial common antigen (ECA) synthesis.</text>
</comment>
<comment type="catalytic activity">
    <reaction evidence="1">
        <text>UDP-N-acetyl-alpha-D-mannosaminouronate + N-acetyl-alpha-D-glucosaminyl-di-trans,octa-cis-undecaprenyl diphosphate = beta-D-ManNAcA-(1-&gt;4)-alpha-D-GlcNAc-di-trans,octa-cis-undecaprenyl diphosphate + UDP + H(+)</text>
        <dbReference type="Rhea" id="RHEA:28366"/>
        <dbReference type="ChEBI" id="CHEBI:15378"/>
        <dbReference type="ChEBI" id="CHEBI:58223"/>
        <dbReference type="ChEBI" id="CHEBI:61495"/>
        <dbReference type="ChEBI" id="CHEBI:62959"/>
        <dbReference type="ChEBI" id="CHEBI:70731"/>
        <dbReference type="EC" id="2.4.1.180"/>
    </reaction>
</comment>
<comment type="pathway">
    <text evidence="1">Bacterial outer membrane biogenesis; enterobacterial common antigen biosynthesis.</text>
</comment>
<comment type="similarity">
    <text evidence="1">Belongs to the glycosyltransferase 26 family.</text>
</comment>
<feature type="chain" id="PRO_0000208434" description="UDP-N-acetyl-D-mannosaminuronic acid transferase">
    <location>
        <begin position="1"/>
        <end position="246"/>
    </location>
</feature>
<evidence type="ECO:0000255" key="1">
    <source>
        <dbReference type="HAMAP-Rule" id="MF_01001"/>
    </source>
</evidence>
<gene>
    <name evidence="1" type="primary">wecG</name>
    <name evidence="1" type="synonym">rffM</name>
    <name type="ordered locus">STM3929</name>
    <name type="ORF">STMD1.61</name>
</gene>
<proteinExistence type="inferred from homology"/>